<dbReference type="EC" id="6.1.1.7" evidence="1"/>
<dbReference type="EMBL" id="CP000123">
    <property type="protein sequence ID" value="ABC01717.1"/>
    <property type="molecule type" value="Genomic_DNA"/>
</dbReference>
<dbReference type="RefSeq" id="WP_011387051.1">
    <property type="nucleotide sequence ID" value="NC_007633.1"/>
</dbReference>
<dbReference type="SMR" id="Q2SSW4"/>
<dbReference type="GeneID" id="23778888"/>
<dbReference type="KEGG" id="mcp:MCAP_0159"/>
<dbReference type="HOGENOM" id="CLU_004485_1_1_14"/>
<dbReference type="PhylomeDB" id="Q2SSW4"/>
<dbReference type="Proteomes" id="UP000001928">
    <property type="component" value="Chromosome"/>
</dbReference>
<dbReference type="GO" id="GO:0005829">
    <property type="term" value="C:cytosol"/>
    <property type="evidence" value="ECO:0007669"/>
    <property type="project" value="TreeGrafter"/>
</dbReference>
<dbReference type="GO" id="GO:0004813">
    <property type="term" value="F:alanine-tRNA ligase activity"/>
    <property type="evidence" value="ECO:0007669"/>
    <property type="project" value="UniProtKB-UniRule"/>
</dbReference>
<dbReference type="GO" id="GO:0002161">
    <property type="term" value="F:aminoacyl-tRNA deacylase activity"/>
    <property type="evidence" value="ECO:0007669"/>
    <property type="project" value="TreeGrafter"/>
</dbReference>
<dbReference type="GO" id="GO:0005524">
    <property type="term" value="F:ATP binding"/>
    <property type="evidence" value="ECO:0007669"/>
    <property type="project" value="UniProtKB-UniRule"/>
</dbReference>
<dbReference type="GO" id="GO:0000049">
    <property type="term" value="F:tRNA binding"/>
    <property type="evidence" value="ECO:0007669"/>
    <property type="project" value="UniProtKB-KW"/>
</dbReference>
<dbReference type="GO" id="GO:0008270">
    <property type="term" value="F:zinc ion binding"/>
    <property type="evidence" value="ECO:0007669"/>
    <property type="project" value="UniProtKB-UniRule"/>
</dbReference>
<dbReference type="GO" id="GO:0006419">
    <property type="term" value="P:alanyl-tRNA aminoacylation"/>
    <property type="evidence" value="ECO:0007669"/>
    <property type="project" value="UniProtKB-UniRule"/>
</dbReference>
<dbReference type="CDD" id="cd00673">
    <property type="entry name" value="AlaRS_core"/>
    <property type="match status" value="1"/>
</dbReference>
<dbReference type="FunFam" id="3.30.930.10:FF:000046">
    <property type="entry name" value="Alanine--tRNA ligase"/>
    <property type="match status" value="1"/>
</dbReference>
<dbReference type="FunFam" id="3.30.980.10:FF:000004">
    <property type="entry name" value="Alanine--tRNA ligase, cytoplasmic"/>
    <property type="match status" value="1"/>
</dbReference>
<dbReference type="Gene3D" id="2.40.30.130">
    <property type="match status" value="1"/>
</dbReference>
<dbReference type="Gene3D" id="3.10.310.40">
    <property type="match status" value="1"/>
</dbReference>
<dbReference type="Gene3D" id="3.30.54.20">
    <property type="match status" value="1"/>
</dbReference>
<dbReference type="Gene3D" id="3.30.930.10">
    <property type="entry name" value="Bira Bifunctional Protein, Domain 2"/>
    <property type="match status" value="1"/>
</dbReference>
<dbReference type="Gene3D" id="3.30.980.10">
    <property type="entry name" value="Threonyl-trna Synthetase, Chain A, domain 2"/>
    <property type="match status" value="1"/>
</dbReference>
<dbReference type="HAMAP" id="MF_00036_B">
    <property type="entry name" value="Ala_tRNA_synth_B"/>
    <property type="match status" value="1"/>
</dbReference>
<dbReference type="InterPro" id="IPR045864">
    <property type="entry name" value="aa-tRNA-synth_II/BPL/LPL"/>
</dbReference>
<dbReference type="InterPro" id="IPR002318">
    <property type="entry name" value="Ala-tRNA-lgiase_IIc"/>
</dbReference>
<dbReference type="InterPro" id="IPR018162">
    <property type="entry name" value="Ala-tRNA-ligase_IIc_anticod-bd"/>
</dbReference>
<dbReference type="InterPro" id="IPR018165">
    <property type="entry name" value="Ala-tRNA-synth_IIc_core"/>
</dbReference>
<dbReference type="InterPro" id="IPR018164">
    <property type="entry name" value="Ala-tRNA-synth_IIc_N"/>
</dbReference>
<dbReference type="InterPro" id="IPR050058">
    <property type="entry name" value="Ala-tRNA_ligase"/>
</dbReference>
<dbReference type="InterPro" id="IPR023033">
    <property type="entry name" value="Ala_tRNA_ligase_euk/bac"/>
</dbReference>
<dbReference type="InterPro" id="IPR003156">
    <property type="entry name" value="DHHA1_dom"/>
</dbReference>
<dbReference type="InterPro" id="IPR018163">
    <property type="entry name" value="Thr/Ala-tRNA-synth_IIc_edit"/>
</dbReference>
<dbReference type="InterPro" id="IPR009000">
    <property type="entry name" value="Transl_B-barrel_sf"/>
</dbReference>
<dbReference type="InterPro" id="IPR012947">
    <property type="entry name" value="tRNA_SAD"/>
</dbReference>
<dbReference type="NCBIfam" id="TIGR00344">
    <property type="entry name" value="alaS"/>
    <property type="match status" value="1"/>
</dbReference>
<dbReference type="PANTHER" id="PTHR11777:SF9">
    <property type="entry name" value="ALANINE--TRNA LIGASE, CYTOPLASMIC"/>
    <property type="match status" value="1"/>
</dbReference>
<dbReference type="PANTHER" id="PTHR11777">
    <property type="entry name" value="ALANYL-TRNA SYNTHETASE"/>
    <property type="match status" value="1"/>
</dbReference>
<dbReference type="Pfam" id="PF02272">
    <property type="entry name" value="DHHA1"/>
    <property type="match status" value="1"/>
</dbReference>
<dbReference type="Pfam" id="PF01411">
    <property type="entry name" value="tRNA-synt_2c"/>
    <property type="match status" value="1"/>
</dbReference>
<dbReference type="Pfam" id="PF07973">
    <property type="entry name" value="tRNA_SAD"/>
    <property type="match status" value="1"/>
</dbReference>
<dbReference type="PRINTS" id="PR00980">
    <property type="entry name" value="TRNASYNTHALA"/>
</dbReference>
<dbReference type="SMART" id="SM00863">
    <property type="entry name" value="tRNA_SAD"/>
    <property type="match status" value="1"/>
</dbReference>
<dbReference type="SUPFAM" id="SSF55681">
    <property type="entry name" value="Class II aaRS and biotin synthetases"/>
    <property type="match status" value="1"/>
</dbReference>
<dbReference type="SUPFAM" id="SSF101353">
    <property type="entry name" value="Putative anticodon-binding domain of alanyl-tRNA synthetase (AlaRS)"/>
    <property type="match status" value="1"/>
</dbReference>
<dbReference type="SUPFAM" id="SSF55186">
    <property type="entry name" value="ThrRS/AlaRS common domain"/>
    <property type="match status" value="1"/>
</dbReference>
<dbReference type="SUPFAM" id="SSF50447">
    <property type="entry name" value="Translation proteins"/>
    <property type="match status" value="1"/>
</dbReference>
<dbReference type="PROSITE" id="PS50860">
    <property type="entry name" value="AA_TRNA_LIGASE_II_ALA"/>
    <property type="match status" value="1"/>
</dbReference>
<sequence length="896" mass="103934">MKKLSTNQIRKIWLDFFISKNHYFLEPVSLIPVDDPSLLWINSGVATLKPYFDGRKTPPSPRLTNSQKAIRTNDIENVGVTARHHTMFEMLGNFSIGDYFKKEAIELAWELLTDKNYFDIDKNKLYITVFNEDIEAYNIWKDVIKIDEDHIFRLSKKTNFWDVGQGPCGPNTEIFYDRGEIWDPNKIGPRLISDDIENDRYIEVWNIVFSQFNNDGNNNYVELPRKNIDTGAGLERFASIFQNTPTNFETDIFYPTIKKVEQLTNNQFKYSIDNYFNPNKKQTRINTAFKVIADHIRATVFAISDGVFPGNKDRGYIIRRLIRRSCVFGNELGIKQAFLYKLVDSVIESMKEFYPYLVDKKSLVEQTIKDEEEKFLKTLSKGYDLLENIIKTKNTVSDKDALLLFESYGFPIEQTIEISELSNVTVDIEGFKKLLEQTKQATRNARKDLKAWDKQNELFTKLKVESEFTGWSEISRDNAKVIYMFTDQKQVESITDQEVFVILDKTPFYAEKGGQAADSGIIFNDQMKGFVIDVQQGPMHQNIHRIKVQDTLKLNDLINCRVDEEKRIYTMKNHSGTHMIHYALREVLGSSVMQSGSYNDENGLRMDFTYHRLPTNQELLKAQNLVLEKIKNKVDRQTYFCSLEESVKKHQALAFFTEKYDEIVRVIKFGDFSSELCGGTHVNNTSEIEDFIITGIESKGSGLYRIKCLTSFKTVNEYLNEQFKIYKDQAEIIIDKYNQNKDLLKNDQLENIYLEIKNITINKDNLILIKDLLDKLRDLNKDYDKKVNDLITANKLLKYKDLTPSLNKDNVNEIKLETTDLNIRDLKQLADDLRNKYNDLIVILLSSTNENNFIVVAVSQSLQNKYKAIDIFNNLEGYETKGGGNANLAQGKFVKK</sequence>
<reference key="1">
    <citation type="submission" date="2005-09" db="EMBL/GenBank/DDBJ databases">
        <authorList>
            <person name="Glass J.I."/>
            <person name="Lartigue C."/>
            <person name="Pfannkoch C."/>
            <person name="Baden-Tillson H."/>
            <person name="Smith H.O."/>
            <person name="Venter J.C."/>
            <person name="Roske K."/>
            <person name="Wise K.S."/>
            <person name="Calcutt M.J."/>
            <person name="Nelson W.C."/>
            <person name="Nierman W.C."/>
        </authorList>
    </citation>
    <scope>NUCLEOTIDE SEQUENCE [LARGE SCALE GENOMIC DNA]</scope>
    <source>
        <strain>California kid / ATCC 27343 / NCTC 10154</strain>
    </source>
</reference>
<evidence type="ECO:0000255" key="1">
    <source>
        <dbReference type="HAMAP-Rule" id="MF_00036"/>
    </source>
</evidence>
<proteinExistence type="inferred from homology"/>
<feature type="chain" id="PRO_0000347691" description="Alanine--tRNA ligase">
    <location>
        <begin position="1"/>
        <end position="896"/>
    </location>
</feature>
<feature type="binding site" evidence="1">
    <location>
        <position position="574"/>
    </location>
    <ligand>
        <name>Zn(2+)</name>
        <dbReference type="ChEBI" id="CHEBI:29105"/>
    </ligand>
</feature>
<feature type="binding site" evidence="1">
    <location>
        <position position="578"/>
    </location>
    <ligand>
        <name>Zn(2+)</name>
        <dbReference type="ChEBI" id="CHEBI:29105"/>
    </ligand>
</feature>
<feature type="binding site" evidence="1">
    <location>
        <position position="677"/>
    </location>
    <ligand>
        <name>Zn(2+)</name>
        <dbReference type="ChEBI" id="CHEBI:29105"/>
    </ligand>
</feature>
<feature type="binding site" evidence="1">
    <location>
        <position position="681"/>
    </location>
    <ligand>
        <name>Zn(2+)</name>
        <dbReference type="ChEBI" id="CHEBI:29105"/>
    </ligand>
</feature>
<comment type="function">
    <text evidence="1">Catalyzes the attachment of alanine to tRNA(Ala) in a two-step reaction: alanine is first activated by ATP to form Ala-AMP and then transferred to the acceptor end of tRNA(Ala). Also edits incorrectly charged Ser-tRNA(Ala) and Gly-tRNA(Ala) via its editing domain.</text>
</comment>
<comment type="catalytic activity">
    <reaction evidence="1">
        <text>tRNA(Ala) + L-alanine + ATP = L-alanyl-tRNA(Ala) + AMP + diphosphate</text>
        <dbReference type="Rhea" id="RHEA:12540"/>
        <dbReference type="Rhea" id="RHEA-COMP:9657"/>
        <dbReference type="Rhea" id="RHEA-COMP:9923"/>
        <dbReference type="ChEBI" id="CHEBI:30616"/>
        <dbReference type="ChEBI" id="CHEBI:33019"/>
        <dbReference type="ChEBI" id="CHEBI:57972"/>
        <dbReference type="ChEBI" id="CHEBI:78442"/>
        <dbReference type="ChEBI" id="CHEBI:78497"/>
        <dbReference type="ChEBI" id="CHEBI:456215"/>
        <dbReference type="EC" id="6.1.1.7"/>
    </reaction>
</comment>
<comment type="cofactor">
    <cofactor evidence="1">
        <name>Zn(2+)</name>
        <dbReference type="ChEBI" id="CHEBI:29105"/>
    </cofactor>
    <text evidence="1">Binds 1 zinc ion per subunit.</text>
</comment>
<comment type="subcellular location">
    <subcellularLocation>
        <location evidence="1">Cytoplasm</location>
    </subcellularLocation>
</comment>
<comment type="domain">
    <text evidence="1">Consists of three domains; the N-terminal catalytic domain, the editing domain and the C-terminal C-Ala domain. The editing domain removes incorrectly charged amino acids, while the C-Ala domain, along with tRNA(Ala), serves as a bridge to cooperatively bring together the editing and aminoacylation centers thus stimulating deacylation of misacylated tRNAs.</text>
</comment>
<comment type="similarity">
    <text evidence="1">Belongs to the class-II aminoacyl-tRNA synthetase family.</text>
</comment>
<accession>Q2SSW4</accession>
<protein>
    <recommendedName>
        <fullName evidence="1">Alanine--tRNA ligase</fullName>
        <ecNumber evidence="1">6.1.1.7</ecNumber>
    </recommendedName>
    <alternativeName>
        <fullName evidence="1">Alanyl-tRNA synthetase</fullName>
        <shortName evidence="1">AlaRS</shortName>
    </alternativeName>
</protein>
<organism>
    <name type="scientific">Mycoplasma capricolum subsp. capricolum (strain California kid / ATCC 27343 / NCTC 10154)</name>
    <dbReference type="NCBI Taxonomy" id="340047"/>
    <lineage>
        <taxon>Bacteria</taxon>
        <taxon>Bacillati</taxon>
        <taxon>Mycoplasmatota</taxon>
        <taxon>Mollicutes</taxon>
        <taxon>Mycoplasmataceae</taxon>
        <taxon>Mycoplasma</taxon>
    </lineage>
</organism>
<gene>
    <name evidence="1" type="primary">alaS</name>
    <name type="ordered locus">MCAP_0159</name>
</gene>
<name>SYA_MYCCT</name>
<keyword id="KW-0030">Aminoacyl-tRNA synthetase</keyword>
<keyword id="KW-0067">ATP-binding</keyword>
<keyword id="KW-0963">Cytoplasm</keyword>
<keyword id="KW-0436">Ligase</keyword>
<keyword id="KW-0479">Metal-binding</keyword>
<keyword id="KW-0547">Nucleotide-binding</keyword>
<keyword id="KW-0648">Protein biosynthesis</keyword>
<keyword id="KW-0694">RNA-binding</keyword>
<keyword id="KW-0820">tRNA-binding</keyword>
<keyword id="KW-0862">Zinc</keyword>